<feature type="chain" id="PRO_0000210580" description="Uncharacterized protein MG377">
    <location>
        <begin position="1"/>
        <end position="193"/>
    </location>
</feature>
<reference key="1">
    <citation type="journal article" date="1995" name="Science">
        <title>The minimal gene complement of Mycoplasma genitalium.</title>
        <authorList>
            <person name="Fraser C.M."/>
            <person name="Gocayne J.D."/>
            <person name="White O."/>
            <person name="Adams M.D."/>
            <person name="Clayton R.A."/>
            <person name="Fleischmann R.D."/>
            <person name="Bult C.J."/>
            <person name="Kerlavage A.R."/>
            <person name="Sutton G.G."/>
            <person name="Kelley J.M."/>
            <person name="Fritchman J.L."/>
            <person name="Weidman J.F."/>
            <person name="Small K.V."/>
            <person name="Sandusky M."/>
            <person name="Fuhrmann J.L."/>
            <person name="Nguyen D.T."/>
            <person name="Utterback T.R."/>
            <person name="Saudek D.M."/>
            <person name="Phillips C.A."/>
            <person name="Merrick J.M."/>
            <person name="Tomb J.-F."/>
            <person name="Dougherty B.A."/>
            <person name="Bott K.F."/>
            <person name="Hu P.-C."/>
            <person name="Lucier T.S."/>
            <person name="Peterson S.N."/>
            <person name="Smith H.O."/>
            <person name="Hutchison C.A. III"/>
            <person name="Venter J.C."/>
        </authorList>
    </citation>
    <scope>NUCLEOTIDE SEQUENCE [LARGE SCALE GENOMIC DNA]</scope>
    <source>
        <strain>ATCC 33530 / DSM 19775 / NCTC 10195 / G37</strain>
    </source>
</reference>
<dbReference type="EMBL" id="L43967">
    <property type="protein sequence ID" value="AAC71604.1"/>
    <property type="molecule type" value="Genomic_DNA"/>
</dbReference>
<dbReference type="PIR" id="G64241">
    <property type="entry name" value="G64241"/>
</dbReference>
<dbReference type="RefSeq" id="WP_009885940.1">
    <property type="nucleotide sequence ID" value="NC_000908.2"/>
</dbReference>
<dbReference type="SMR" id="P47617"/>
<dbReference type="STRING" id="243273.MG_377"/>
<dbReference type="GeneID" id="88282560"/>
<dbReference type="KEGG" id="mge:MG_377"/>
<dbReference type="eggNOG" id="ENOG503466U">
    <property type="taxonomic scope" value="Bacteria"/>
</dbReference>
<dbReference type="HOGENOM" id="CLU_110277_0_0_14"/>
<dbReference type="InParanoid" id="P47617"/>
<dbReference type="OrthoDB" id="398943at2"/>
<dbReference type="BioCyc" id="MGEN243273:G1GJ2-471-MONOMER"/>
<dbReference type="Proteomes" id="UP000000807">
    <property type="component" value="Chromosome"/>
</dbReference>
<dbReference type="GO" id="GO:0006457">
    <property type="term" value="P:protein folding"/>
    <property type="evidence" value="ECO:0007669"/>
    <property type="project" value="InterPro"/>
</dbReference>
<dbReference type="GO" id="GO:0015031">
    <property type="term" value="P:protein transport"/>
    <property type="evidence" value="ECO:0007669"/>
    <property type="project" value="InterPro"/>
</dbReference>
<dbReference type="Gene3D" id="1.10.3120.10">
    <property type="entry name" value="Trigger factor, C-terminal domain"/>
    <property type="match status" value="1"/>
</dbReference>
<dbReference type="InterPro" id="IPR054820">
    <property type="entry name" value="MPN555-like"/>
</dbReference>
<dbReference type="InterPro" id="IPR037041">
    <property type="entry name" value="Trigger_fac_C_sf"/>
</dbReference>
<dbReference type="InterPro" id="IPR027304">
    <property type="entry name" value="Trigger_fact/SurA_dom_sf"/>
</dbReference>
<dbReference type="NCBIfam" id="NF045756">
    <property type="entry name" value="MPN555"/>
    <property type="match status" value="1"/>
</dbReference>
<dbReference type="SUPFAM" id="SSF109998">
    <property type="entry name" value="Triger factor/SurA peptide-binding domain-like"/>
    <property type="match status" value="1"/>
</dbReference>
<proteinExistence type="predicted"/>
<sequence>MATNLKSIAKLQKPIQYDKVIEVDRIFADPAFIEQHRQRILASFKDAKESALYHELTHIVIKDNLFSAAMNEIVSYFEFQINPEELKNVVEGLKRDVVKDADEKTIQSIAEKIIKKALVFNFLQKEWKVEVSDDIVKRVISLYYEKTNQNVREYLDDKQKFEGIRTALIEERMVLETINHFKFHFNLTGQLPS</sequence>
<accession>P47617</accession>
<keyword id="KW-1185">Reference proteome</keyword>
<protein>
    <recommendedName>
        <fullName>Uncharacterized protein MG377</fullName>
    </recommendedName>
</protein>
<name>Y377_MYCGE</name>
<organism>
    <name type="scientific">Mycoplasma genitalium (strain ATCC 33530 / DSM 19775 / NCTC 10195 / G37)</name>
    <name type="common">Mycoplasmoides genitalium</name>
    <dbReference type="NCBI Taxonomy" id="243273"/>
    <lineage>
        <taxon>Bacteria</taxon>
        <taxon>Bacillati</taxon>
        <taxon>Mycoplasmatota</taxon>
        <taxon>Mycoplasmoidales</taxon>
        <taxon>Mycoplasmoidaceae</taxon>
        <taxon>Mycoplasmoides</taxon>
    </lineage>
</organism>
<gene>
    <name type="ordered locus">MG377</name>
</gene>